<gene>
    <name type="primary">MRPS12</name>
</gene>
<reference key="1">
    <citation type="submission" date="2006-02" db="EMBL/GenBank/DDBJ databases">
        <authorList>
            <consortium name="NIH - Mammalian Gene Collection (MGC) project"/>
        </authorList>
    </citation>
    <scope>NUCLEOTIDE SEQUENCE [LARGE SCALE MRNA]</scope>
    <source>
        <strain>Hereford</strain>
        <tissue>Testis</tissue>
    </source>
</reference>
<reference evidence="5" key="2">
    <citation type="journal article" date="2014" name="Proc. Natl. Acad. Sci. U.S.A.">
        <title>Cryo-EM structure of the small subunit of the mammalian mitochondrial ribosome.</title>
        <authorList>
            <person name="Kaushal P.S."/>
            <person name="Sharma M.R."/>
            <person name="Booth T.M."/>
            <person name="Haque E.M."/>
            <person name="Tung C.S."/>
            <person name="Sanbonmatsu K.Y."/>
            <person name="Spremulli L.L."/>
            <person name="Agrawal R.K."/>
        </authorList>
    </citation>
    <scope>STRUCTURE BY ELECTRON MICROSCOPY (7.00 ANGSTROMS)</scope>
    <scope>SUBCELLULAR LOCATION</scope>
    <scope>SUBUNIT</scope>
</reference>
<evidence type="ECO:0000255" key="1"/>
<evidence type="ECO:0000256" key="2">
    <source>
        <dbReference type="SAM" id="MobiDB-lite"/>
    </source>
</evidence>
<evidence type="ECO:0000269" key="3">
    <source>
    </source>
</evidence>
<evidence type="ECO:0000305" key="4"/>
<evidence type="ECO:0007744" key="5">
    <source>
        <dbReference type="PDB" id="3JD5"/>
    </source>
</evidence>
<evidence type="ECO:0007829" key="6">
    <source>
        <dbReference type="PDB" id="6NEQ"/>
    </source>
</evidence>
<evidence type="ECO:0007829" key="7">
    <source>
        <dbReference type="PDB" id="6NF8"/>
    </source>
</evidence>
<organism>
    <name type="scientific">Bos taurus</name>
    <name type="common">Bovine</name>
    <dbReference type="NCBI Taxonomy" id="9913"/>
    <lineage>
        <taxon>Eukaryota</taxon>
        <taxon>Metazoa</taxon>
        <taxon>Chordata</taxon>
        <taxon>Craniata</taxon>
        <taxon>Vertebrata</taxon>
        <taxon>Euteleostomi</taxon>
        <taxon>Mammalia</taxon>
        <taxon>Eutheria</taxon>
        <taxon>Laurasiatheria</taxon>
        <taxon>Artiodactyla</taxon>
        <taxon>Ruminantia</taxon>
        <taxon>Pecora</taxon>
        <taxon>Bovidae</taxon>
        <taxon>Bovinae</taxon>
        <taxon>Bos</taxon>
    </lineage>
</organism>
<accession>Q29RU1</accession>
<comment type="subunit">
    <text evidence="3">Component of the mitochondrial ribosome small subunit (28S) which comprises a 12S rRNA and about 30 distinct proteins.</text>
</comment>
<comment type="subcellular location">
    <subcellularLocation>
        <location evidence="3">Mitochondrion</location>
    </subcellularLocation>
</comment>
<comment type="similarity">
    <text evidence="4">Belongs to the universal ribosomal protein uS12 family.</text>
</comment>
<sequence>MSWSGLLRGLSMSLNYGLALAPRPWGTRPMATLNQLHRRGPPKFPPSKPGPTEGRPQLKGVVLRTFIRKPKKPNSANRKCCRVRLSTGREAVCFIPGEGHNLQEHHVVLVQGGRTQDLPGVKLKVVRGKYDCGHVQKKK</sequence>
<name>RT12_BOVIN</name>
<proteinExistence type="evidence at protein level"/>
<keyword id="KW-0002">3D-structure</keyword>
<keyword id="KW-0496">Mitochondrion</keyword>
<keyword id="KW-1185">Reference proteome</keyword>
<keyword id="KW-0687">Ribonucleoprotein</keyword>
<keyword id="KW-0689">Ribosomal protein</keyword>
<keyword id="KW-0809">Transit peptide</keyword>
<feature type="transit peptide" description="Mitochondrion" evidence="1">
    <location>
        <begin position="1"/>
        <end position="29"/>
    </location>
</feature>
<feature type="chain" id="PRO_0000240294" description="Small ribosomal subunit protein uS12m">
    <location>
        <begin position="30"/>
        <end position="139"/>
    </location>
</feature>
<feature type="region of interest" description="Disordered" evidence="2">
    <location>
        <begin position="37"/>
        <end position="57"/>
    </location>
</feature>
<feature type="helix" evidence="6">
    <location>
        <begin position="33"/>
        <end position="39"/>
    </location>
</feature>
<feature type="strand" evidence="6">
    <location>
        <begin position="56"/>
        <end position="68"/>
    </location>
</feature>
<feature type="helix" evidence="6">
    <location>
        <begin position="72"/>
        <end position="74"/>
    </location>
</feature>
<feature type="strand" evidence="6">
    <location>
        <begin position="78"/>
        <end position="83"/>
    </location>
</feature>
<feature type="strand" evidence="7">
    <location>
        <begin position="91"/>
        <end position="94"/>
    </location>
</feature>
<feature type="strand" evidence="6">
    <location>
        <begin position="97"/>
        <end position="99"/>
    </location>
</feature>
<feature type="strand" evidence="6">
    <location>
        <begin position="107"/>
        <end position="112"/>
    </location>
</feature>
<feature type="strand" evidence="6">
    <location>
        <begin position="127"/>
        <end position="129"/>
    </location>
</feature>
<protein>
    <recommendedName>
        <fullName evidence="4">Small ribosomal subunit protein uS12m</fullName>
    </recommendedName>
    <alternativeName>
        <fullName>28S ribosomal protein S12, mitochondrial</fullName>
        <shortName>MRP-S12</shortName>
        <shortName>S12mt</shortName>
    </alternativeName>
</protein>
<dbReference type="EMBL" id="BC114019">
    <property type="protein sequence ID" value="AAI14020.1"/>
    <property type="molecule type" value="mRNA"/>
</dbReference>
<dbReference type="RefSeq" id="NP_001070569.1">
    <property type="nucleotide sequence ID" value="NM_001077101.2"/>
</dbReference>
<dbReference type="RefSeq" id="XP_005219097.1">
    <property type="nucleotide sequence ID" value="XM_005219040.5"/>
</dbReference>
<dbReference type="RefSeq" id="XP_005219098.1">
    <property type="nucleotide sequence ID" value="XM_005219041.5"/>
</dbReference>
<dbReference type="PDB" id="3JD5">
    <property type="method" value="EM"/>
    <property type="resolution" value="7.00 A"/>
    <property type="chains" value="L=1-139"/>
</dbReference>
<dbReference type="PDB" id="6NEQ">
    <property type="method" value="EM"/>
    <property type="resolution" value="3.32 A"/>
    <property type="chains" value="L=1-139"/>
</dbReference>
<dbReference type="PDB" id="6NF8">
    <property type="method" value="EM"/>
    <property type="resolution" value="3.48 A"/>
    <property type="chains" value="L=1-139"/>
</dbReference>
<dbReference type="PDBsum" id="3JD5"/>
<dbReference type="PDBsum" id="6NEQ"/>
<dbReference type="PDBsum" id="6NF8"/>
<dbReference type="EMDB" id="EMD-9358"/>
<dbReference type="EMDB" id="EMD-9362"/>
<dbReference type="SMR" id="Q29RU1"/>
<dbReference type="FunCoup" id="Q29RU1">
    <property type="interactions" value="1259"/>
</dbReference>
<dbReference type="IntAct" id="Q29RU1">
    <property type="interactions" value="1"/>
</dbReference>
<dbReference type="STRING" id="9913.ENSBTAP00000002335"/>
<dbReference type="PaxDb" id="9913-ENSBTAP00000002335"/>
<dbReference type="GeneID" id="768042"/>
<dbReference type="KEGG" id="bta:768042"/>
<dbReference type="CTD" id="6183"/>
<dbReference type="VEuPathDB" id="HostDB:ENSBTAG00000001782"/>
<dbReference type="eggNOG" id="KOG1750">
    <property type="taxonomic scope" value="Eukaryota"/>
</dbReference>
<dbReference type="HOGENOM" id="CLU_104295_3_1_1"/>
<dbReference type="InParanoid" id="Q29RU1"/>
<dbReference type="OMA" id="MHRQGPP"/>
<dbReference type="OrthoDB" id="361013at2759"/>
<dbReference type="TreeFam" id="TF315095"/>
<dbReference type="Reactome" id="R-BTA-5389840">
    <property type="pathway name" value="Mitochondrial translation elongation"/>
</dbReference>
<dbReference type="Reactome" id="R-BTA-5419276">
    <property type="pathway name" value="Mitochondrial translation termination"/>
</dbReference>
<dbReference type="Proteomes" id="UP000009136">
    <property type="component" value="Chromosome 18"/>
</dbReference>
<dbReference type="Bgee" id="ENSBTAG00000001782">
    <property type="expression patterns" value="Expressed in laryngeal cartilage and 108 other cell types or tissues"/>
</dbReference>
<dbReference type="GO" id="GO:0005743">
    <property type="term" value="C:mitochondrial inner membrane"/>
    <property type="evidence" value="ECO:0000304"/>
    <property type="project" value="Reactome"/>
</dbReference>
<dbReference type="GO" id="GO:0005763">
    <property type="term" value="C:mitochondrial small ribosomal subunit"/>
    <property type="evidence" value="ECO:0000314"/>
    <property type="project" value="UniProtKB"/>
</dbReference>
<dbReference type="GO" id="GO:0005840">
    <property type="term" value="C:ribosome"/>
    <property type="evidence" value="ECO:0000318"/>
    <property type="project" value="GO_Central"/>
</dbReference>
<dbReference type="GO" id="GO:0003735">
    <property type="term" value="F:structural constituent of ribosome"/>
    <property type="evidence" value="ECO:0007005"/>
    <property type="project" value="UniProtKB"/>
</dbReference>
<dbReference type="GO" id="GO:0032543">
    <property type="term" value="P:mitochondrial translation"/>
    <property type="evidence" value="ECO:0007005"/>
    <property type="project" value="UniProtKB"/>
</dbReference>
<dbReference type="GO" id="GO:0006412">
    <property type="term" value="P:translation"/>
    <property type="evidence" value="ECO:0000318"/>
    <property type="project" value="GO_Central"/>
</dbReference>
<dbReference type="CDD" id="cd03368">
    <property type="entry name" value="Ribosomal_S12"/>
    <property type="match status" value="1"/>
</dbReference>
<dbReference type="FunFam" id="2.40.50.140:FF:000115">
    <property type="entry name" value="28S ribosomal protein S12, mitochondrial"/>
    <property type="match status" value="1"/>
</dbReference>
<dbReference type="Gene3D" id="2.40.50.140">
    <property type="entry name" value="Nucleic acid-binding proteins"/>
    <property type="match status" value="1"/>
</dbReference>
<dbReference type="InterPro" id="IPR012340">
    <property type="entry name" value="NA-bd_OB-fold"/>
</dbReference>
<dbReference type="InterPro" id="IPR006032">
    <property type="entry name" value="Ribosomal_uS12"/>
</dbReference>
<dbReference type="InterPro" id="IPR005679">
    <property type="entry name" value="Ribosomal_uS12_bac"/>
</dbReference>
<dbReference type="NCBIfam" id="TIGR00981">
    <property type="entry name" value="rpsL_bact"/>
    <property type="match status" value="1"/>
</dbReference>
<dbReference type="PANTHER" id="PTHR11652">
    <property type="entry name" value="30S RIBOSOMAL PROTEIN S12 FAMILY MEMBER"/>
    <property type="match status" value="1"/>
</dbReference>
<dbReference type="Pfam" id="PF00164">
    <property type="entry name" value="Ribosom_S12_S23"/>
    <property type="match status" value="1"/>
</dbReference>
<dbReference type="PRINTS" id="PR01034">
    <property type="entry name" value="RIBOSOMALS12"/>
</dbReference>
<dbReference type="SUPFAM" id="SSF50249">
    <property type="entry name" value="Nucleic acid-binding proteins"/>
    <property type="match status" value="1"/>
</dbReference>
<dbReference type="PROSITE" id="PS00055">
    <property type="entry name" value="RIBOSOMAL_S12"/>
    <property type="match status" value="1"/>
</dbReference>